<organism>
    <name type="scientific">Thioalkalivibrio sulfidiphilus (strain HL-EbGR7)</name>
    <dbReference type="NCBI Taxonomy" id="396588"/>
    <lineage>
        <taxon>Bacteria</taxon>
        <taxon>Pseudomonadati</taxon>
        <taxon>Pseudomonadota</taxon>
        <taxon>Gammaproteobacteria</taxon>
        <taxon>Chromatiales</taxon>
        <taxon>Ectothiorhodospiraceae</taxon>
        <taxon>Thioalkalivibrio</taxon>
    </lineage>
</organism>
<feature type="chain" id="PRO_1000117790" description="2-dehydro-3-deoxyphosphooctonate aldolase">
    <location>
        <begin position="1"/>
        <end position="280"/>
    </location>
</feature>
<reference key="1">
    <citation type="journal article" date="2011" name="Stand. Genomic Sci.">
        <title>Complete genome sequence of 'Thioalkalivibrio sulfidophilus' HL-EbGr7.</title>
        <authorList>
            <person name="Muyzer G."/>
            <person name="Sorokin D.Y."/>
            <person name="Mavromatis K."/>
            <person name="Lapidus A."/>
            <person name="Clum A."/>
            <person name="Ivanova N."/>
            <person name="Pati A."/>
            <person name="d'Haeseleer P."/>
            <person name="Woyke T."/>
            <person name="Kyrpides N.C."/>
        </authorList>
    </citation>
    <scope>NUCLEOTIDE SEQUENCE [LARGE SCALE GENOMIC DNA]</scope>
    <source>
        <strain>HL-EbGR7</strain>
    </source>
</reference>
<accession>B8GQ74</accession>
<protein>
    <recommendedName>
        <fullName evidence="1">2-dehydro-3-deoxyphosphooctonate aldolase</fullName>
        <ecNumber evidence="1">2.5.1.55</ecNumber>
    </recommendedName>
    <alternativeName>
        <fullName evidence="1">3-deoxy-D-manno-octulosonic acid 8-phosphate synthase</fullName>
    </alternativeName>
    <alternativeName>
        <fullName evidence="1">KDO-8-phosphate synthase</fullName>
        <shortName evidence="1">KDO 8-P synthase</shortName>
        <shortName evidence="1">KDOPS</shortName>
    </alternativeName>
    <alternativeName>
        <fullName evidence="1">Phospho-2-dehydro-3-deoxyoctonate aldolase</fullName>
    </alternativeName>
</protein>
<comment type="catalytic activity">
    <reaction evidence="1">
        <text>D-arabinose 5-phosphate + phosphoenolpyruvate + H2O = 3-deoxy-alpha-D-manno-2-octulosonate-8-phosphate + phosphate</text>
        <dbReference type="Rhea" id="RHEA:14053"/>
        <dbReference type="ChEBI" id="CHEBI:15377"/>
        <dbReference type="ChEBI" id="CHEBI:43474"/>
        <dbReference type="ChEBI" id="CHEBI:57693"/>
        <dbReference type="ChEBI" id="CHEBI:58702"/>
        <dbReference type="ChEBI" id="CHEBI:85985"/>
        <dbReference type="EC" id="2.5.1.55"/>
    </reaction>
</comment>
<comment type="pathway">
    <text evidence="1">Carbohydrate biosynthesis; 3-deoxy-D-manno-octulosonate biosynthesis; 3-deoxy-D-manno-octulosonate from D-ribulose 5-phosphate: step 2/3.</text>
</comment>
<comment type="pathway">
    <text evidence="1">Bacterial outer membrane biogenesis; lipopolysaccharide biosynthesis.</text>
</comment>
<comment type="subcellular location">
    <subcellularLocation>
        <location evidence="1">Cytoplasm</location>
    </subcellularLocation>
</comment>
<comment type="similarity">
    <text evidence="1">Belongs to the KdsA family.</text>
</comment>
<keyword id="KW-0963">Cytoplasm</keyword>
<keyword id="KW-0448">Lipopolysaccharide biosynthesis</keyword>
<keyword id="KW-1185">Reference proteome</keyword>
<keyword id="KW-0808">Transferase</keyword>
<gene>
    <name evidence="1" type="primary">kdsA</name>
    <name type="ordered locus">Tgr7_1183</name>
</gene>
<proteinExistence type="inferred from homology"/>
<name>KDSA_THISH</name>
<sequence>MKLCHFEAGLEHPIFLISGPCVIESEQLALDTAGQLKELCERVGVPFIYKSSFDKANRSSTRSFRGLGLEEGLRILETVKQQIGVPVLTDVHEDTPLEEVAAVVDVLQTPAFLCRQTNFIQNVARQGRPVNIKKGQFLAPWDMGNVVDKAREAGNDQIMVCERGVSFGYNTLVSDMRGLAVMRETGCPVVFDATHSVQQPGGKGTSSGGQREFVPVLARAAVASGVAGLFMETHPDPDKALSDGPNAWPLPLMEELLVTLKTLDDVVKAQGFIESRFLNT</sequence>
<evidence type="ECO:0000255" key="1">
    <source>
        <dbReference type="HAMAP-Rule" id="MF_00056"/>
    </source>
</evidence>
<dbReference type="EC" id="2.5.1.55" evidence="1"/>
<dbReference type="EMBL" id="CP001339">
    <property type="protein sequence ID" value="ACL72269.1"/>
    <property type="molecule type" value="Genomic_DNA"/>
</dbReference>
<dbReference type="RefSeq" id="WP_012637752.1">
    <property type="nucleotide sequence ID" value="NC_011901.1"/>
</dbReference>
<dbReference type="SMR" id="B8GQ74"/>
<dbReference type="STRING" id="396588.Tgr7_1183"/>
<dbReference type="KEGG" id="tgr:Tgr7_1183"/>
<dbReference type="eggNOG" id="COG2877">
    <property type="taxonomic scope" value="Bacteria"/>
</dbReference>
<dbReference type="HOGENOM" id="CLU_036666_0_0_6"/>
<dbReference type="OrthoDB" id="9776934at2"/>
<dbReference type="UniPathway" id="UPA00030"/>
<dbReference type="UniPathway" id="UPA00357">
    <property type="reaction ID" value="UER00474"/>
</dbReference>
<dbReference type="Proteomes" id="UP000002383">
    <property type="component" value="Chromosome"/>
</dbReference>
<dbReference type="GO" id="GO:0005737">
    <property type="term" value="C:cytoplasm"/>
    <property type="evidence" value="ECO:0007669"/>
    <property type="project" value="UniProtKB-SubCell"/>
</dbReference>
<dbReference type="GO" id="GO:0008676">
    <property type="term" value="F:3-deoxy-8-phosphooctulonate synthase activity"/>
    <property type="evidence" value="ECO:0007669"/>
    <property type="project" value="UniProtKB-UniRule"/>
</dbReference>
<dbReference type="GO" id="GO:0019294">
    <property type="term" value="P:keto-3-deoxy-D-manno-octulosonic acid biosynthetic process"/>
    <property type="evidence" value="ECO:0007669"/>
    <property type="project" value="UniProtKB-UniRule"/>
</dbReference>
<dbReference type="Gene3D" id="3.20.20.70">
    <property type="entry name" value="Aldolase class I"/>
    <property type="match status" value="1"/>
</dbReference>
<dbReference type="HAMAP" id="MF_00056">
    <property type="entry name" value="KDO8P_synth"/>
    <property type="match status" value="1"/>
</dbReference>
<dbReference type="InterPro" id="IPR013785">
    <property type="entry name" value="Aldolase_TIM"/>
</dbReference>
<dbReference type="InterPro" id="IPR006218">
    <property type="entry name" value="DAHP1/KDSA"/>
</dbReference>
<dbReference type="InterPro" id="IPR006269">
    <property type="entry name" value="KDO8P_synthase"/>
</dbReference>
<dbReference type="NCBIfam" id="TIGR01362">
    <property type="entry name" value="KDO8P_synth"/>
    <property type="match status" value="1"/>
</dbReference>
<dbReference type="NCBIfam" id="NF003543">
    <property type="entry name" value="PRK05198.1"/>
    <property type="match status" value="1"/>
</dbReference>
<dbReference type="PANTHER" id="PTHR21057">
    <property type="entry name" value="PHOSPHO-2-DEHYDRO-3-DEOXYHEPTONATE ALDOLASE"/>
    <property type="match status" value="1"/>
</dbReference>
<dbReference type="Pfam" id="PF00793">
    <property type="entry name" value="DAHP_synth_1"/>
    <property type="match status" value="1"/>
</dbReference>
<dbReference type="SUPFAM" id="SSF51569">
    <property type="entry name" value="Aldolase"/>
    <property type="match status" value="1"/>
</dbReference>